<dbReference type="EMBL" id="AC134229">
    <property type="protein sequence ID" value="AAO06977.1"/>
    <property type="molecule type" value="Genomic_DNA"/>
</dbReference>
<dbReference type="EMBL" id="DP000009">
    <property type="protein sequence ID" value="ABF94861.1"/>
    <property type="molecule type" value="Genomic_DNA"/>
</dbReference>
<dbReference type="EMBL" id="AP008209">
    <property type="protein sequence ID" value="BAF11411.1"/>
    <property type="status" value="ALT_SEQ"/>
    <property type="molecule type" value="Genomic_DNA"/>
</dbReference>
<dbReference type="EMBL" id="AP014959">
    <property type="status" value="NOT_ANNOTATED_CDS"/>
    <property type="molecule type" value="Genomic_DNA"/>
</dbReference>
<dbReference type="EMBL" id="CM000140">
    <property type="protein sequence ID" value="EAZ26207.1"/>
    <property type="molecule type" value="Genomic_DNA"/>
</dbReference>
<dbReference type="SMR" id="Q0DTM7"/>
<dbReference type="FunCoup" id="Q0DTM7">
    <property type="interactions" value="503"/>
</dbReference>
<dbReference type="STRING" id="39947.Q0DTM7"/>
<dbReference type="PaxDb" id="39947-Q0DTM7"/>
<dbReference type="GeneID" id="9271521"/>
<dbReference type="KEGG" id="osa:9271521"/>
<dbReference type="InParanoid" id="Q0DTM7"/>
<dbReference type="OrthoDB" id="1923367at2759"/>
<dbReference type="Proteomes" id="UP000000763">
    <property type="component" value="Chromosome 3"/>
</dbReference>
<dbReference type="Proteomes" id="UP000007752">
    <property type="component" value="Chromosome 3"/>
</dbReference>
<dbReference type="Proteomes" id="UP000059680">
    <property type="component" value="Chromosome 3"/>
</dbReference>
<dbReference type="GO" id="GO:0000307">
    <property type="term" value="C:cyclin-dependent protein kinase holoenzyme complex"/>
    <property type="evidence" value="ECO:0000318"/>
    <property type="project" value="GO_Central"/>
</dbReference>
<dbReference type="GO" id="GO:0005737">
    <property type="term" value="C:cytoplasm"/>
    <property type="evidence" value="ECO:0000318"/>
    <property type="project" value="GO_Central"/>
</dbReference>
<dbReference type="GO" id="GO:0005634">
    <property type="term" value="C:nucleus"/>
    <property type="evidence" value="ECO:0000318"/>
    <property type="project" value="GO_Central"/>
</dbReference>
<dbReference type="GO" id="GO:0016538">
    <property type="term" value="F:cyclin-dependent protein serine/threonine kinase regulator activity"/>
    <property type="evidence" value="ECO:0000318"/>
    <property type="project" value="GO_Central"/>
</dbReference>
<dbReference type="GO" id="GO:0051301">
    <property type="term" value="P:cell division"/>
    <property type="evidence" value="ECO:0007669"/>
    <property type="project" value="UniProtKB-KW"/>
</dbReference>
<dbReference type="GO" id="GO:0000082">
    <property type="term" value="P:G1/S transition of mitotic cell cycle"/>
    <property type="evidence" value="ECO:0000318"/>
    <property type="project" value="GO_Central"/>
</dbReference>
<dbReference type="FunFam" id="1.10.472.10:FF:000109">
    <property type="entry name" value="Cyclin-J18-like"/>
    <property type="match status" value="1"/>
</dbReference>
<dbReference type="Gene3D" id="1.10.472.10">
    <property type="entry name" value="Cyclin-like"/>
    <property type="match status" value="1"/>
</dbReference>
<dbReference type="InterPro" id="IPR036915">
    <property type="entry name" value="Cyclin-like_sf"/>
</dbReference>
<dbReference type="InterPro" id="IPR006671">
    <property type="entry name" value="Cyclin_N"/>
</dbReference>
<dbReference type="Pfam" id="PF00134">
    <property type="entry name" value="Cyclin_N"/>
    <property type="match status" value="1"/>
</dbReference>
<dbReference type="SUPFAM" id="SSF47954">
    <property type="entry name" value="Cyclin-like"/>
    <property type="match status" value="1"/>
</dbReference>
<protein>
    <recommendedName>
        <fullName>Cyclin-J18-like</fullName>
    </recommendedName>
</protein>
<comment type="similarity">
    <text evidence="1">Belongs to the cyclin family.</text>
</comment>
<comment type="sequence caution" evidence="1">
    <conflict type="erroneous gene model prediction">
        <sequence resource="EMBL-CDS" id="BAF11411"/>
    </conflict>
</comment>
<sequence>MDEDRAVEAAASAWPGPSRRRRLIEFLLHASTRLDLRPVVKYTALSFFADRLLPSLRRKMGFCGARGGRAVTSWLLEPLRDSNLELFALVAVWIASKIHELKPLSVKSLKALGDRIIADQHFTCRDFANAELVFMEVVEYNIGSLNIAFTYLEELLVQFREISKIGDLLNMDVCMEILDILYETEDSSWLFNSPCQLAASALVTAYAISVPKQRWEFPILPWVTFTTSYDEEEIMKVVLTILMHVLKPDEMKGKGERDFNI</sequence>
<proteinExistence type="inferred from homology"/>
<keyword id="KW-0131">Cell cycle</keyword>
<keyword id="KW-0132">Cell division</keyword>
<keyword id="KW-0195">Cyclin</keyword>
<keyword id="KW-1185">Reference proteome</keyword>
<name>CCJ18_ORYSJ</name>
<evidence type="ECO:0000305" key="1"/>
<reference key="1">
    <citation type="journal article" date="2005" name="Genome Res.">
        <title>Sequence, annotation, and analysis of synteny between rice chromosome 3 and diverged grass species.</title>
        <authorList>
            <consortium name="The rice chromosome 3 sequencing consortium"/>
            <person name="Buell C.R."/>
            <person name="Yuan Q."/>
            <person name="Ouyang S."/>
            <person name="Liu J."/>
            <person name="Zhu W."/>
            <person name="Wang A."/>
            <person name="Maiti R."/>
            <person name="Haas B."/>
            <person name="Wortman J."/>
            <person name="Pertea M."/>
            <person name="Jones K.M."/>
            <person name="Kim M."/>
            <person name="Overton L."/>
            <person name="Tsitrin T."/>
            <person name="Fadrosh D."/>
            <person name="Bera J."/>
            <person name="Weaver B."/>
            <person name="Jin S."/>
            <person name="Johri S."/>
            <person name="Reardon M."/>
            <person name="Webb K."/>
            <person name="Hill J."/>
            <person name="Moffat K."/>
            <person name="Tallon L."/>
            <person name="Van Aken S."/>
            <person name="Lewis M."/>
            <person name="Utterback T."/>
            <person name="Feldblyum T."/>
            <person name="Zismann V."/>
            <person name="Iobst S."/>
            <person name="Hsiao J."/>
            <person name="de Vazeille A.R."/>
            <person name="Salzberg S.L."/>
            <person name="White O."/>
            <person name="Fraser C.M."/>
            <person name="Yu Y."/>
            <person name="Kim H."/>
            <person name="Rambo T."/>
            <person name="Currie J."/>
            <person name="Collura K."/>
            <person name="Kernodle-Thompson S."/>
            <person name="Wei F."/>
            <person name="Kudrna K."/>
            <person name="Ammiraju J.S.S."/>
            <person name="Luo M."/>
            <person name="Goicoechea J.L."/>
            <person name="Wing R.A."/>
            <person name="Henry D."/>
            <person name="Oates R."/>
            <person name="Palmer M."/>
            <person name="Pries G."/>
            <person name="Saski C."/>
            <person name="Simmons J."/>
            <person name="Soderlund C."/>
            <person name="Nelson W."/>
            <person name="de la Bastide M."/>
            <person name="Spiegel L."/>
            <person name="Nascimento L."/>
            <person name="Huang E."/>
            <person name="Preston R."/>
            <person name="Zutavern T."/>
            <person name="Palmer L."/>
            <person name="O'Shaughnessy A."/>
            <person name="Dike S."/>
            <person name="McCombie W.R."/>
            <person name="Minx P."/>
            <person name="Cordum H."/>
            <person name="Wilson R."/>
            <person name="Jin W."/>
            <person name="Lee H.R."/>
            <person name="Jiang J."/>
            <person name="Jackson S."/>
        </authorList>
    </citation>
    <scope>NUCLEOTIDE SEQUENCE [LARGE SCALE GENOMIC DNA]</scope>
    <source>
        <strain>cv. Nipponbare</strain>
    </source>
</reference>
<reference key="2">
    <citation type="journal article" date="2005" name="Nature">
        <title>The map-based sequence of the rice genome.</title>
        <authorList>
            <consortium name="International rice genome sequencing project (IRGSP)"/>
        </authorList>
    </citation>
    <scope>NUCLEOTIDE SEQUENCE [LARGE SCALE GENOMIC DNA]</scope>
    <source>
        <strain>cv. Nipponbare</strain>
    </source>
</reference>
<reference key="3">
    <citation type="journal article" date="2008" name="Nucleic Acids Res.">
        <title>The rice annotation project database (RAP-DB): 2008 update.</title>
        <authorList>
            <consortium name="The rice annotation project (RAP)"/>
        </authorList>
    </citation>
    <scope>GENOME REANNOTATION</scope>
    <source>
        <strain>cv. Nipponbare</strain>
    </source>
</reference>
<reference key="4">
    <citation type="journal article" date="2013" name="Rice">
        <title>Improvement of the Oryza sativa Nipponbare reference genome using next generation sequence and optical map data.</title>
        <authorList>
            <person name="Kawahara Y."/>
            <person name="de la Bastide M."/>
            <person name="Hamilton J.P."/>
            <person name="Kanamori H."/>
            <person name="McCombie W.R."/>
            <person name="Ouyang S."/>
            <person name="Schwartz D.C."/>
            <person name="Tanaka T."/>
            <person name="Wu J."/>
            <person name="Zhou S."/>
            <person name="Childs K.L."/>
            <person name="Davidson R.M."/>
            <person name="Lin H."/>
            <person name="Quesada-Ocampo L."/>
            <person name="Vaillancourt B."/>
            <person name="Sakai H."/>
            <person name="Lee S.S."/>
            <person name="Kim J."/>
            <person name="Numa H."/>
            <person name="Itoh T."/>
            <person name="Buell C.R."/>
            <person name="Matsumoto T."/>
        </authorList>
    </citation>
    <scope>GENOME REANNOTATION</scope>
    <source>
        <strain>cv. Nipponbare</strain>
    </source>
</reference>
<reference key="5">
    <citation type="journal article" date="2005" name="PLoS Biol.">
        <title>The genomes of Oryza sativa: a history of duplications.</title>
        <authorList>
            <person name="Yu J."/>
            <person name="Wang J."/>
            <person name="Lin W."/>
            <person name="Li S."/>
            <person name="Li H."/>
            <person name="Zhou J."/>
            <person name="Ni P."/>
            <person name="Dong W."/>
            <person name="Hu S."/>
            <person name="Zeng C."/>
            <person name="Zhang J."/>
            <person name="Zhang Y."/>
            <person name="Li R."/>
            <person name="Xu Z."/>
            <person name="Li S."/>
            <person name="Li X."/>
            <person name="Zheng H."/>
            <person name="Cong L."/>
            <person name="Lin L."/>
            <person name="Yin J."/>
            <person name="Geng J."/>
            <person name="Li G."/>
            <person name="Shi J."/>
            <person name="Liu J."/>
            <person name="Lv H."/>
            <person name="Li J."/>
            <person name="Wang J."/>
            <person name="Deng Y."/>
            <person name="Ran L."/>
            <person name="Shi X."/>
            <person name="Wang X."/>
            <person name="Wu Q."/>
            <person name="Li C."/>
            <person name="Ren X."/>
            <person name="Wang J."/>
            <person name="Wang X."/>
            <person name="Li D."/>
            <person name="Liu D."/>
            <person name="Zhang X."/>
            <person name="Ji Z."/>
            <person name="Zhao W."/>
            <person name="Sun Y."/>
            <person name="Zhang Z."/>
            <person name="Bao J."/>
            <person name="Han Y."/>
            <person name="Dong L."/>
            <person name="Ji J."/>
            <person name="Chen P."/>
            <person name="Wu S."/>
            <person name="Liu J."/>
            <person name="Xiao Y."/>
            <person name="Bu D."/>
            <person name="Tan J."/>
            <person name="Yang L."/>
            <person name="Ye C."/>
            <person name="Zhang J."/>
            <person name="Xu J."/>
            <person name="Zhou Y."/>
            <person name="Yu Y."/>
            <person name="Zhang B."/>
            <person name="Zhuang S."/>
            <person name="Wei H."/>
            <person name="Liu B."/>
            <person name="Lei M."/>
            <person name="Yu H."/>
            <person name="Li Y."/>
            <person name="Xu H."/>
            <person name="Wei S."/>
            <person name="He X."/>
            <person name="Fang L."/>
            <person name="Zhang Z."/>
            <person name="Zhang Y."/>
            <person name="Huang X."/>
            <person name="Su Z."/>
            <person name="Tong W."/>
            <person name="Li J."/>
            <person name="Tong Z."/>
            <person name="Li S."/>
            <person name="Ye J."/>
            <person name="Wang L."/>
            <person name="Fang L."/>
            <person name="Lei T."/>
            <person name="Chen C.-S."/>
            <person name="Chen H.-C."/>
            <person name="Xu Z."/>
            <person name="Li H."/>
            <person name="Huang H."/>
            <person name="Zhang F."/>
            <person name="Xu H."/>
            <person name="Li N."/>
            <person name="Zhao C."/>
            <person name="Li S."/>
            <person name="Dong L."/>
            <person name="Huang Y."/>
            <person name="Li L."/>
            <person name="Xi Y."/>
            <person name="Qi Q."/>
            <person name="Li W."/>
            <person name="Zhang B."/>
            <person name="Hu W."/>
            <person name="Zhang Y."/>
            <person name="Tian X."/>
            <person name="Jiao Y."/>
            <person name="Liang X."/>
            <person name="Jin J."/>
            <person name="Gao L."/>
            <person name="Zheng W."/>
            <person name="Hao B."/>
            <person name="Liu S.-M."/>
            <person name="Wang W."/>
            <person name="Yuan L."/>
            <person name="Cao M."/>
            <person name="McDermott J."/>
            <person name="Samudrala R."/>
            <person name="Wang J."/>
            <person name="Wong G.K.-S."/>
            <person name="Yang H."/>
        </authorList>
    </citation>
    <scope>NUCLEOTIDE SEQUENCE [LARGE SCALE GENOMIC DNA]</scope>
    <source>
        <strain>cv. Nipponbare</strain>
    </source>
</reference>
<feature type="chain" id="PRO_0000287075" description="Cyclin-J18-like">
    <location>
        <begin position="1"/>
        <end position="261"/>
    </location>
</feature>
<gene>
    <name type="ordered locus">Os03g0237900</name>
    <name type="ordered locus">LOC_Os03g13480</name>
    <name type="ORF">OJ1081D05.11</name>
    <name type="ORF">OsJ_009690</name>
</gene>
<organism>
    <name type="scientific">Oryza sativa subsp. japonica</name>
    <name type="common">Rice</name>
    <dbReference type="NCBI Taxonomy" id="39947"/>
    <lineage>
        <taxon>Eukaryota</taxon>
        <taxon>Viridiplantae</taxon>
        <taxon>Streptophyta</taxon>
        <taxon>Embryophyta</taxon>
        <taxon>Tracheophyta</taxon>
        <taxon>Spermatophyta</taxon>
        <taxon>Magnoliopsida</taxon>
        <taxon>Liliopsida</taxon>
        <taxon>Poales</taxon>
        <taxon>Poaceae</taxon>
        <taxon>BOP clade</taxon>
        <taxon>Oryzoideae</taxon>
        <taxon>Oryzeae</taxon>
        <taxon>Oryzinae</taxon>
        <taxon>Oryza</taxon>
        <taxon>Oryza sativa</taxon>
    </lineage>
</organism>
<accession>Q0DTM7</accession>
<accession>Q8H005</accession>